<keyword id="KW-1185">Reference proteome</keyword>
<accession>Q8TR12</accession>
<evidence type="ECO:0000255" key="1">
    <source>
        <dbReference type="HAMAP-Rule" id="MF_01223"/>
    </source>
</evidence>
<comment type="similarity">
    <text evidence="1">Belongs to the UPF0212 family.</text>
</comment>
<gene>
    <name type="ordered locus">MA_1372</name>
</gene>
<sequence>MKNFHVVLEAAWLVRDVKTADDAIGVAISEAGKRLNPKLDFVEVDVGSTSCPACGEPFSSVFIAANTALVGLIFEMKVFDAESAEHAERIAKSVIGKSLRDIPLTVVEVTEFERSGEKGDQQQKGKAKK</sequence>
<proteinExistence type="inferred from homology"/>
<protein>
    <recommendedName>
        <fullName evidence="1">UPF0212 protein MA_1372</fullName>
    </recommendedName>
</protein>
<name>Y1372_METAC</name>
<feature type="chain" id="PRO_0000068275" description="UPF0212 protein MA_1372">
    <location>
        <begin position="1"/>
        <end position="129"/>
    </location>
</feature>
<reference key="1">
    <citation type="journal article" date="2002" name="Genome Res.">
        <title>The genome of Methanosarcina acetivorans reveals extensive metabolic and physiological diversity.</title>
        <authorList>
            <person name="Galagan J.E."/>
            <person name="Nusbaum C."/>
            <person name="Roy A."/>
            <person name="Endrizzi M.G."/>
            <person name="Macdonald P."/>
            <person name="FitzHugh W."/>
            <person name="Calvo S."/>
            <person name="Engels R."/>
            <person name="Smirnov S."/>
            <person name="Atnoor D."/>
            <person name="Brown A."/>
            <person name="Allen N."/>
            <person name="Naylor J."/>
            <person name="Stange-Thomann N."/>
            <person name="DeArellano K."/>
            <person name="Johnson R."/>
            <person name="Linton L."/>
            <person name="McEwan P."/>
            <person name="McKernan K."/>
            <person name="Talamas J."/>
            <person name="Tirrell A."/>
            <person name="Ye W."/>
            <person name="Zimmer A."/>
            <person name="Barber R.D."/>
            <person name="Cann I."/>
            <person name="Graham D.E."/>
            <person name="Grahame D.A."/>
            <person name="Guss A.M."/>
            <person name="Hedderich R."/>
            <person name="Ingram-Smith C."/>
            <person name="Kuettner H.C."/>
            <person name="Krzycki J.A."/>
            <person name="Leigh J.A."/>
            <person name="Li W."/>
            <person name="Liu J."/>
            <person name="Mukhopadhyay B."/>
            <person name="Reeve J.N."/>
            <person name="Smith K."/>
            <person name="Springer T.A."/>
            <person name="Umayam L.A."/>
            <person name="White O."/>
            <person name="White R.H."/>
            <person name="de Macario E.C."/>
            <person name="Ferry J.G."/>
            <person name="Jarrell K.F."/>
            <person name="Jing H."/>
            <person name="Macario A.J.L."/>
            <person name="Paulsen I.T."/>
            <person name="Pritchett M."/>
            <person name="Sowers K.R."/>
            <person name="Swanson R.V."/>
            <person name="Zinder S.H."/>
            <person name="Lander E."/>
            <person name="Metcalf W.W."/>
            <person name="Birren B."/>
        </authorList>
    </citation>
    <scope>NUCLEOTIDE SEQUENCE [LARGE SCALE GENOMIC DNA]</scope>
    <source>
        <strain>ATCC 35395 / DSM 2834 / JCM 12185 / C2A</strain>
    </source>
</reference>
<dbReference type="EMBL" id="AE010299">
    <property type="protein sequence ID" value="AAM04788.1"/>
    <property type="molecule type" value="Genomic_DNA"/>
</dbReference>
<dbReference type="RefSeq" id="WP_011021390.1">
    <property type="nucleotide sequence ID" value="NC_003552.1"/>
</dbReference>
<dbReference type="FunCoup" id="Q8TR12">
    <property type="interactions" value="1"/>
</dbReference>
<dbReference type="STRING" id="188937.MA_1372"/>
<dbReference type="EnsemblBacteria" id="AAM04788">
    <property type="protein sequence ID" value="AAM04788"/>
    <property type="gene ID" value="MA_1372"/>
</dbReference>
<dbReference type="GeneID" id="1473260"/>
<dbReference type="KEGG" id="mac:MA_1372"/>
<dbReference type="HOGENOM" id="CLU_138334_0_0_2"/>
<dbReference type="InParanoid" id="Q8TR12"/>
<dbReference type="OrthoDB" id="63517at2157"/>
<dbReference type="PhylomeDB" id="Q8TR12"/>
<dbReference type="Proteomes" id="UP000002487">
    <property type="component" value="Chromosome"/>
</dbReference>
<dbReference type="HAMAP" id="MF_01223">
    <property type="entry name" value="UPF0212"/>
    <property type="match status" value="1"/>
</dbReference>
<dbReference type="InterPro" id="IPR007564">
    <property type="entry name" value="UPF0212"/>
</dbReference>
<dbReference type="NCBIfam" id="NF003035">
    <property type="entry name" value="PRK03922.1"/>
    <property type="match status" value="1"/>
</dbReference>
<dbReference type="PANTHER" id="PTHR42199">
    <property type="entry name" value="UPF0212 PROTEIN MJ0068"/>
    <property type="match status" value="1"/>
</dbReference>
<dbReference type="PANTHER" id="PTHR42199:SF1">
    <property type="entry name" value="UPF0212 PROTEIN TK1194"/>
    <property type="match status" value="1"/>
</dbReference>
<dbReference type="Pfam" id="PF04475">
    <property type="entry name" value="DUF555"/>
    <property type="match status" value="1"/>
</dbReference>
<dbReference type="PIRSF" id="PIRSF016934">
    <property type="entry name" value="UCP016934"/>
    <property type="match status" value="1"/>
</dbReference>
<organism>
    <name type="scientific">Methanosarcina acetivorans (strain ATCC 35395 / DSM 2834 / JCM 12185 / C2A)</name>
    <dbReference type="NCBI Taxonomy" id="188937"/>
    <lineage>
        <taxon>Archaea</taxon>
        <taxon>Methanobacteriati</taxon>
        <taxon>Methanobacteriota</taxon>
        <taxon>Stenosarchaea group</taxon>
        <taxon>Methanomicrobia</taxon>
        <taxon>Methanosarcinales</taxon>
        <taxon>Methanosarcinaceae</taxon>
        <taxon>Methanosarcina</taxon>
    </lineage>
</organism>